<keyword id="KW-0106">Calcium</keyword>
<keyword id="KW-1003">Cell membrane</keyword>
<keyword id="KW-0204">Cytolysis</keyword>
<keyword id="KW-0225">Disease variant</keyword>
<keyword id="KW-1015">Disulfide bond</keyword>
<keyword id="KW-0245">EGF-like domain</keyword>
<keyword id="KW-0967">Endosome</keyword>
<keyword id="KW-0951">Familial hemophagocytic lymphohistiocytosis</keyword>
<keyword id="KW-0325">Glycoprotein</keyword>
<keyword id="KW-0458">Lysosome</keyword>
<keyword id="KW-0472">Membrane</keyword>
<keyword id="KW-0479">Metal-binding</keyword>
<keyword id="KW-1267">Proteomics identification</keyword>
<keyword id="KW-1185">Reference proteome</keyword>
<keyword id="KW-0964">Secreted</keyword>
<keyword id="KW-0732">Signal</keyword>
<keyword id="KW-0812">Transmembrane</keyword>
<keyword id="KW-1134">Transmembrane beta strand</keyword>
<evidence type="ECO:0000250" key="1">
    <source>
        <dbReference type="UniProtKB" id="P10820"/>
    </source>
</evidence>
<evidence type="ECO:0000255" key="2"/>
<evidence type="ECO:0000255" key="3">
    <source>
        <dbReference type="PROSITE-ProRule" id="PRU00041"/>
    </source>
</evidence>
<evidence type="ECO:0000255" key="4">
    <source>
        <dbReference type="PROSITE-ProRule" id="PRU00745"/>
    </source>
</evidence>
<evidence type="ECO:0000269" key="5">
    <source>
    </source>
</evidence>
<evidence type="ECO:0000269" key="6">
    <source>
    </source>
</evidence>
<evidence type="ECO:0000269" key="7">
    <source>
    </source>
</evidence>
<evidence type="ECO:0000269" key="8">
    <source>
    </source>
</evidence>
<evidence type="ECO:0000269" key="9">
    <source>
    </source>
</evidence>
<evidence type="ECO:0000269" key="10">
    <source>
    </source>
</evidence>
<evidence type="ECO:0000269" key="11">
    <source>
    </source>
</evidence>
<evidence type="ECO:0000269" key="12">
    <source>
    </source>
</evidence>
<evidence type="ECO:0000269" key="13">
    <source>
    </source>
</evidence>
<evidence type="ECO:0000269" key="14">
    <source>
    </source>
</evidence>
<evidence type="ECO:0000269" key="15">
    <source>
    </source>
</evidence>
<evidence type="ECO:0000269" key="16">
    <source>
    </source>
</evidence>
<evidence type="ECO:0000269" key="17">
    <source>
    </source>
</evidence>
<evidence type="ECO:0000269" key="18">
    <source>
    </source>
</evidence>
<evidence type="ECO:0000305" key="19"/>
<sequence length="555" mass="61377">MAARLLLLGILLLLLPLPVPAPCHTAARSECKRSHKFVPGAWLAGEGVDVTSLRRSGSFPVDTQRFLRPDGTCTLCENALQEGTLQRLPLALTNWRAQGSGCQRHVTRAKVSSTEAVARDAARSIRNDWKVGLDVTPKPTSNVHVSVAGSHSQAANFAAQKTHQDQYSFSTDTVECRFYSFHVVHTPPLHPDFKRALGDLPHHFNASTQPAYLRLISNYGTHFIRAVELGGRISALTALRTCELALEGLTDNEVEDCLTVEAQVNIGIHGSISAEAKACEEKKKKHKMTASFHQTYRERHSEVVGGHHTSINDLLFGIQAGPEQYSAWVNSLPGSPGLVDYTLEPLHVLLDSQDPRREALRRALSQYLTDRARWRDCSRPCPPGRQKSPRDPCQCVCHGSAVTTQDCCPRQRGLAQLEVTFIQAWGLWGDWFTATDAYVKLFFGGQELRTSTVWDNNNPIWSVRLDFGDVLLATGGPLRLQVWDQDSGRDDDLLGTCDQAPKSGSHEVRCNLNHGHLKFRYHARCLPHLGGGTCLDYVPQMLLGEPPGNRSGAVW</sequence>
<name>PERF_HUMAN</name>
<proteinExistence type="evidence at protein level"/>
<organism>
    <name type="scientific">Homo sapiens</name>
    <name type="common">Human</name>
    <dbReference type="NCBI Taxonomy" id="9606"/>
    <lineage>
        <taxon>Eukaryota</taxon>
        <taxon>Metazoa</taxon>
        <taxon>Chordata</taxon>
        <taxon>Craniata</taxon>
        <taxon>Vertebrata</taxon>
        <taxon>Euteleostomi</taxon>
        <taxon>Mammalia</taxon>
        <taxon>Eutheria</taxon>
        <taxon>Euarchontoglires</taxon>
        <taxon>Primates</taxon>
        <taxon>Haplorrhini</taxon>
        <taxon>Catarrhini</taxon>
        <taxon>Hominidae</taxon>
        <taxon>Homo</taxon>
    </lineage>
</organism>
<comment type="function">
    <text evidence="1 9 10 11 12 14 15 17 18">Pore-forming protein that plays a key role in granzyme-mediated programmed cell death, and in defense against virus-infected or neoplastic cells (PubMed:20889983, PubMed:21037563, PubMed:24558045, PubMed:9058810, PubMed:9164947). Plays an important role in killing other cells that are recognized as non-self by the immune system, e.g. in transplant rejection or some forms of autoimmune disease (PubMed:9058810). Can insert into the membrane of target cells in its calcium-bound form, oligomerize and form large pores (PubMed:20889983, PubMed:21037563). Promotes cytolysis and apoptosis of target cells by mediating the passage and uptake of cytotoxic granzymes (PubMed:20038786, PubMed:20225066, PubMed:24558045, PubMed:32299851). Facilitates the delivery of cationic cargo protein, while anionic or neural proteins are not delivered efficiently (PubMed:24558045). Perforin pores allow the release of mature caspase-7 (CASP7) into the extracellular milieu (By similarity).</text>
</comment>
<comment type="cofactor">
    <cofactor evidence="3">
        <name>Ca(2+)</name>
        <dbReference type="ChEBI" id="CHEBI:29108"/>
    </cofactor>
</comment>
<comment type="subunit">
    <text evidence="11 12">Monomer, as soluble protein (PubMed:20889983, PubMed:21037563). Homooligomer; homooligomerizes to form a pore-forming ring (PubMed:20889983, PubMed:21037563).</text>
</comment>
<comment type="interaction">
    <interactant intactId="EBI-724466">
        <id>P14222</id>
    </interactant>
    <interactant intactId="EBI-3867333">
        <id>A8MQ03</id>
        <label>CYSRT1</label>
    </interactant>
    <organismsDiffer>false</organismsDiffer>
    <experiments>3</experiments>
</comment>
<comment type="interaction">
    <interactant intactId="EBI-724466">
        <id>P14222</id>
    </interactant>
    <interactant intactId="EBI-2505785">
        <id>P10144</id>
        <label>GZMB</label>
    </interactant>
    <organismsDiffer>false</organismsDiffer>
    <experiments>3</experiments>
</comment>
<comment type="interaction">
    <interactant intactId="EBI-724466">
        <id>P14222</id>
    </interactant>
    <interactant intactId="EBI-948001">
        <id>Q15323</id>
        <label>KRT31</label>
    </interactant>
    <organismsDiffer>false</organismsDiffer>
    <experiments>6</experiments>
</comment>
<comment type="interaction">
    <interactant intactId="EBI-724466">
        <id>P14222</id>
    </interactant>
    <interactant intactId="EBI-22310682">
        <id>P0DPK4</id>
        <label>NOTCH2NLC</label>
    </interactant>
    <organismsDiffer>false</organismsDiffer>
    <experiments>3</experiments>
</comment>
<comment type="interaction">
    <interactant intactId="EBI-724466">
        <id>P14222</id>
    </interactant>
    <interactant intactId="EBI-724466">
        <id>P14222</id>
        <label>PRF1</label>
    </interactant>
    <organismsDiffer>false</organismsDiffer>
    <experiments>3</experiments>
</comment>
<comment type="subcellular location">
    <subcellularLocation>
        <location evidence="9 13">Cytolytic granule</location>
    </subcellularLocation>
    <subcellularLocation>
        <location>Secreted</location>
    </subcellularLocation>
    <subcellularLocation>
        <location evidence="11 12">Cell membrane</location>
        <topology evidence="11 12">Multi-pass membrane protein</topology>
    </subcellularLocation>
    <subcellularLocation>
        <location evidence="9">Endosome lumen</location>
    </subcellularLocation>
    <text evidence="9 11">Stored in cytolytic granules of cytolytic T-lymphocytes and secreted into the cleft between T-lymphocyte and target cell (PubMed:20038786). Inserts into the cell membrane of target cells and forms pores (PubMed:20889983). Membrane insertion and pore formation requires a major conformation change (PubMed:20889983). May be taken up via endocytosis involving clathrin-coated vesicles and accumulate in a first time in large early endosomes (PubMed:20038786).</text>
</comment>
<comment type="induction">
    <text evidence="16">Repressed by contact with target cells.</text>
</comment>
<comment type="domain">
    <text evidence="1">Perforin consists of three domains: (1) the MACPF domain, which includes the central machinery of pore formation, (2) the EGF-like domain, which forms a 'shelf-like' assembly connecting the MACPF and C2 domains, and (3) the C2 domain, which mediates calcium-dependent binding to lipid membranes. The C2 domain is critical for initial calcium-dependent interaction with lipid membranes of the target cell: calcium-binding causes a significant structural rearrangement, leading to oligomerization and deployment of the two transmembrane beta-strands (named CH1/TMH1 and CH2/TMH2) that enter the membrane as amphipathic beta-hairpins. The third calcium-binding site (Ca(2+) 3), which constitutes the weakest affinity site, triggers structural rearrangements in the C2 domain that facilitate its interaction with lipid membranes.</text>
</comment>
<comment type="PTM">
    <text evidence="1">N-glycosylated.</text>
</comment>
<comment type="disease" evidence="5 6">
    <disease id="DI-01573">
        <name>Hemophagocytic lymphohistiocytosis, familial, 2</name>
        <acronym>FHL2</acronym>
        <description>A rare disorder characterized by immune dysregulation with hypercytokinemia, defective function of natural killer cell, and massive infiltration of several organs by activated lymphocytes and macrophages. The clinical features of the disease include fever, hepatosplenomegaly, cytopenia, and less frequently neurological abnormalities ranging from irritability and hypotonia to seizures, cranial nerve deficits and ataxia.</description>
        <dbReference type="MIM" id="603553"/>
    </disease>
    <text>The disease is caused by variants affecting the gene represented in this entry.</text>
</comment>
<comment type="similarity">
    <text evidence="19">Belongs to the complement C6/C7/C8/C9 family.</text>
</comment>
<comment type="online information" name="PRF1base">
    <link uri="https://databases.lovd.nl/shared/genes/PRF1"/>
    <text>PRF1 mutation db</text>
</comment>
<comment type="online information" name="Wikipedia">
    <link uri="https://en.wikipedia.org/wiki/Perforin"/>
    <text>Perforin entry</text>
</comment>
<comment type="online information" name="Protein Spotlight">
    <link uri="https://www.proteinspotlight.org/back_issues/126"/>
    <text>Our hollow architecture - Issue 126 of February 2011</text>
</comment>
<protein>
    <recommendedName>
        <fullName>Perforin-1</fullName>
        <shortName>P1</shortName>
    </recommendedName>
    <alternativeName>
        <fullName>Cytolysin</fullName>
    </alternativeName>
    <alternativeName>
        <fullName>Lymphocyte pore-forming protein</fullName>
        <shortName>PFP</shortName>
    </alternativeName>
</protein>
<accession>P14222</accession>
<accession>B2R6X4</accession>
<accession>Q59F57</accession>
<accession>Q86WX7</accession>
<reference key="1">
    <citation type="journal article" date="1988" name="Nature">
        <title>Structure and function of human perforin.</title>
        <authorList>
            <person name="Lichtenheld M.G."/>
            <person name="Olsen K.J."/>
            <person name="Lu P."/>
            <person name="Lowrey D.M."/>
            <person name="Hameed A."/>
            <person name="Hengartner H."/>
            <person name="Podack E.R."/>
        </authorList>
    </citation>
    <scope>NUCLEOTIDE SEQUENCE [MRNA]</scope>
    <source>
        <tissue>Natural killer cell</tissue>
    </source>
</reference>
<reference key="2">
    <citation type="journal article" date="1989" name="Immunogenetics">
        <title>Molecular cloning and chromosomal assignment of a human perforin (PFP) gene.</title>
        <authorList>
            <person name="Shinkai Y."/>
            <person name="Yoshida C.M."/>
            <person name="Maeda K."/>
            <person name="Kobata T."/>
            <person name="Maruyama K."/>
            <person name="Yodoi J."/>
            <person name="Yagita H."/>
            <person name="Okumura K."/>
        </authorList>
    </citation>
    <scope>NUCLEOTIDE SEQUENCE [MRNA]</scope>
</reference>
<reference key="3">
    <citation type="journal article" date="1989" name="J. Immunol.">
        <title>Structure of the human perforin gene. A simple gene organization with interesting potential regulatory sequences.</title>
        <authorList>
            <person name="Lichtenheld M.G."/>
            <person name="Podack E.R."/>
        </authorList>
    </citation>
    <scope>NUCLEOTIDE SEQUENCE [GENOMIC DNA]</scope>
</reference>
<reference key="4">
    <citation type="journal article" date="2004" name="Nat. Genet.">
        <title>Complete sequencing and characterization of 21,243 full-length human cDNAs.</title>
        <authorList>
            <person name="Ota T."/>
            <person name="Suzuki Y."/>
            <person name="Nishikawa T."/>
            <person name="Otsuki T."/>
            <person name="Sugiyama T."/>
            <person name="Irie R."/>
            <person name="Wakamatsu A."/>
            <person name="Hayashi K."/>
            <person name="Sato H."/>
            <person name="Nagai K."/>
            <person name="Kimura K."/>
            <person name="Makita H."/>
            <person name="Sekine M."/>
            <person name="Obayashi M."/>
            <person name="Nishi T."/>
            <person name="Shibahara T."/>
            <person name="Tanaka T."/>
            <person name="Ishii S."/>
            <person name="Yamamoto J."/>
            <person name="Saito K."/>
            <person name="Kawai Y."/>
            <person name="Isono Y."/>
            <person name="Nakamura Y."/>
            <person name="Nagahari K."/>
            <person name="Murakami K."/>
            <person name="Yasuda T."/>
            <person name="Iwayanagi T."/>
            <person name="Wagatsuma M."/>
            <person name="Shiratori A."/>
            <person name="Sudo H."/>
            <person name="Hosoiri T."/>
            <person name="Kaku Y."/>
            <person name="Kodaira H."/>
            <person name="Kondo H."/>
            <person name="Sugawara M."/>
            <person name="Takahashi M."/>
            <person name="Kanda K."/>
            <person name="Yokoi T."/>
            <person name="Furuya T."/>
            <person name="Kikkawa E."/>
            <person name="Omura Y."/>
            <person name="Abe K."/>
            <person name="Kamihara K."/>
            <person name="Katsuta N."/>
            <person name="Sato K."/>
            <person name="Tanikawa M."/>
            <person name="Yamazaki M."/>
            <person name="Ninomiya K."/>
            <person name="Ishibashi T."/>
            <person name="Yamashita H."/>
            <person name="Murakawa K."/>
            <person name="Fujimori K."/>
            <person name="Tanai H."/>
            <person name="Kimata M."/>
            <person name="Watanabe M."/>
            <person name="Hiraoka S."/>
            <person name="Chiba Y."/>
            <person name="Ishida S."/>
            <person name="Ono Y."/>
            <person name="Takiguchi S."/>
            <person name="Watanabe S."/>
            <person name="Yosida M."/>
            <person name="Hotuta T."/>
            <person name="Kusano J."/>
            <person name="Kanehori K."/>
            <person name="Takahashi-Fujii A."/>
            <person name="Hara H."/>
            <person name="Tanase T.-O."/>
            <person name="Nomura Y."/>
            <person name="Togiya S."/>
            <person name="Komai F."/>
            <person name="Hara R."/>
            <person name="Takeuchi K."/>
            <person name="Arita M."/>
            <person name="Imose N."/>
            <person name="Musashino K."/>
            <person name="Yuuki H."/>
            <person name="Oshima A."/>
            <person name="Sasaki N."/>
            <person name="Aotsuka S."/>
            <person name="Yoshikawa Y."/>
            <person name="Matsunawa H."/>
            <person name="Ichihara T."/>
            <person name="Shiohata N."/>
            <person name="Sano S."/>
            <person name="Moriya S."/>
            <person name="Momiyama H."/>
            <person name="Satoh N."/>
            <person name="Takami S."/>
            <person name="Terashima Y."/>
            <person name="Suzuki O."/>
            <person name="Nakagawa S."/>
            <person name="Senoh A."/>
            <person name="Mizoguchi H."/>
            <person name="Goto Y."/>
            <person name="Shimizu F."/>
            <person name="Wakebe H."/>
            <person name="Hishigaki H."/>
            <person name="Watanabe T."/>
            <person name="Sugiyama A."/>
            <person name="Takemoto M."/>
            <person name="Kawakami B."/>
            <person name="Yamazaki M."/>
            <person name="Watanabe K."/>
            <person name="Kumagai A."/>
            <person name="Itakura S."/>
            <person name="Fukuzumi Y."/>
            <person name="Fujimori Y."/>
            <person name="Komiyama M."/>
            <person name="Tashiro H."/>
            <person name="Tanigami A."/>
            <person name="Fujiwara T."/>
            <person name="Ono T."/>
            <person name="Yamada K."/>
            <person name="Fujii Y."/>
            <person name="Ozaki K."/>
            <person name="Hirao M."/>
            <person name="Ohmori Y."/>
            <person name="Kawabata A."/>
            <person name="Hikiji T."/>
            <person name="Kobatake N."/>
            <person name="Inagaki H."/>
            <person name="Ikema Y."/>
            <person name="Okamoto S."/>
            <person name="Okitani R."/>
            <person name="Kawakami T."/>
            <person name="Noguchi S."/>
            <person name="Itoh T."/>
            <person name="Shigeta K."/>
            <person name="Senba T."/>
            <person name="Matsumura K."/>
            <person name="Nakajima Y."/>
            <person name="Mizuno T."/>
            <person name="Morinaga M."/>
            <person name="Sasaki M."/>
            <person name="Togashi T."/>
            <person name="Oyama M."/>
            <person name="Hata H."/>
            <person name="Watanabe M."/>
            <person name="Komatsu T."/>
            <person name="Mizushima-Sugano J."/>
            <person name="Satoh T."/>
            <person name="Shirai Y."/>
            <person name="Takahashi Y."/>
            <person name="Nakagawa K."/>
            <person name="Okumura K."/>
            <person name="Nagase T."/>
            <person name="Nomura N."/>
            <person name="Kikuchi H."/>
            <person name="Masuho Y."/>
            <person name="Yamashita R."/>
            <person name="Nakai K."/>
            <person name="Yada T."/>
            <person name="Nakamura Y."/>
            <person name="Ohara O."/>
            <person name="Isogai T."/>
            <person name="Sugano S."/>
        </authorList>
    </citation>
    <scope>NUCLEOTIDE SEQUENCE [LARGE SCALE MRNA]</scope>
    <source>
        <tissue>Spleen</tissue>
    </source>
</reference>
<reference key="5">
    <citation type="journal article" date="2004" name="Nature">
        <title>The DNA sequence and comparative analysis of human chromosome 10.</title>
        <authorList>
            <person name="Deloukas P."/>
            <person name="Earthrowl M.E."/>
            <person name="Grafham D.V."/>
            <person name="Rubenfield M."/>
            <person name="French L."/>
            <person name="Steward C.A."/>
            <person name="Sims S.K."/>
            <person name="Jones M.C."/>
            <person name="Searle S."/>
            <person name="Scott C."/>
            <person name="Howe K."/>
            <person name="Hunt S.E."/>
            <person name="Andrews T.D."/>
            <person name="Gilbert J.G.R."/>
            <person name="Swarbreck D."/>
            <person name="Ashurst J.L."/>
            <person name="Taylor A."/>
            <person name="Battles J."/>
            <person name="Bird C.P."/>
            <person name="Ainscough R."/>
            <person name="Almeida J.P."/>
            <person name="Ashwell R.I.S."/>
            <person name="Ambrose K.D."/>
            <person name="Babbage A.K."/>
            <person name="Bagguley C.L."/>
            <person name="Bailey J."/>
            <person name="Banerjee R."/>
            <person name="Bates K."/>
            <person name="Beasley H."/>
            <person name="Bray-Allen S."/>
            <person name="Brown A.J."/>
            <person name="Brown J.Y."/>
            <person name="Burford D.C."/>
            <person name="Burrill W."/>
            <person name="Burton J."/>
            <person name="Cahill P."/>
            <person name="Camire D."/>
            <person name="Carter N.P."/>
            <person name="Chapman J.C."/>
            <person name="Clark S.Y."/>
            <person name="Clarke G."/>
            <person name="Clee C.M."/>
            <person name="Clegg S."/>
            <person name="Corby N."/>
            <person name="Coulson A."/>
            <person name="Dhami P."/>
            <person name="Dutta I."/>
            <person name="Dunn M."/>
            <person name="Faulkner L."/>
            <person name="Frankish A."/>
            <person name="Frankland J.A."/>
            <person name="Garner P."/>
            <person name="Garnett J."/>
            <person name="Gribble S."/>
            <person name="Griffiths C."/>
            <person name="Grocock R."/>
            <person name="Gustafson E."/>
            <person name="Hammond S."/>
            <person name="Harley J.L."/>
            <person name="Hart E."/>
            <person name="Heath P.D."/>
            <person name="Ho T.P."/>
            <person name="Hopkins B."/>
            <person name="Horne J."/>
            <person name="Howden P.J."/>
            <person name="Huckle E."/>
            <person name="Hynds C."/>
            <person name="Johnson C."/>
            <person name="Johnson D."/>
            <person name="Kana A."/>
            <person name="Kay M."/>
            <person name="Kimberley A.M."/>
            <person name="Kershaw J.K."/>
            <person name="Kokkinaki M."/>
            <person name="Laird G.K."/>
            <person name="Lawlor S."/>
            <person name="Lee H.M."/>
            <person name="Leongamornlert D.A."/>
            <person name="Laird G."/>
            <person name="Lloyd C."/>
            <person name="Lloyd D.M."/>
            <person name="Loveland J."/>
            <person name="Lovell J."/>
            <person name="McLaren S."/>
            <person name="McLay K.E."/>
            <person name="McMurray A."/>
            <person name="Mashreghi-Mohammadi M."/>
            <person name="Matthews L."/>
            <person name="Milne S."/>
            <person name="Nickerson T."/>
            <person name="Nguyen M."/>
            <person name="Overton-Larty E."/>
            <person name="Palmer S.A."/>
            <person name="Pearce A.V."/>
            <person name="Peck A.I."/>
            <person name="Pelan S."/>
            <person name="Phillimore B."/>
            <person name="Porter K."/>
            <person name="Rice C.M."/>
            <person name="Rogosin A."/>
            <person name="Ross M.T."/>
            <person name="Sarafidou T."/>
            <person name="Sehra H.K."/>
            <person name="Shownkeen R."/>
            <person name="Skuce C.D."/>
            <person name="Smith M."/>
            <person name="Standring L."/>
            <person name="Sycamore N."/>
            <person name="Tester J."/>
            <person name="Thorpe A."/>
            <person name="Torcasso W."/>
            <person name="Tracey A."/>
            <person name="Tromans A."/>
            <person name="Tsolas J."/>
            <person name="Wall M."/>
            <person name="Walsh J."/>
            <person name="Wang H."/>
            <person name="Weinstock K."/>
            <person name="West A.P."/>
            <person name="Willey D.L."/>
            <person name="Whitehead S.L."/>
            <person name="Wilming L."/>
            <person name="Wray P.W."/>
            <person name="Young L."/>
            <person name="Chen Y."/>
            <person name="Lovering R.C."/>
            <person name="Moschonas N.K."/>
            <person name="Siebert R."/>
            <person name="Fechtel K."/>
            <person name="Bentley D."/>
            <person name="Durbin R.M."/>
            <person name="Hubbard T."/>
            <person name="Doucette-Stamm L."/>
            <person name="Beck S."/>
            <person name="Smith D.R."/>
            <person name="Rogers J."/>
        </authorList>
    </citation>
    <scope>NUCLEOTIDE SEQUENCE [LARGE SCALE GENOMIC DNA]</scope>
</reference>
<reference key="6">
    <citation type="submission" date="2005-07" db="EMBL/GenBank/DDBJ databases">
        <authorList>
            <person name="Mural R.J."/>
            <person name="Istrail S."/>
            <person name="Sutton G.G."/>
            <person name="Florea L."/>
            <person name="Halpern A.L."/>
            <person name="Mobarry C.M."/>
            <person name="Lippert R."/>
            <person name="Walenz B."/>
            <person name="Shatkay H."/>
            <person name="Dew I."/>
            <person name="Miller J.R."/>
            <person name="Flanigan M.J."/>
            <person name="Edwards N.J."/>
            <person name="Bolanos R."/>
            <person name="Fasulo D."/>
            <person name="Halldorsson B.V."/>
            <person name="Hannenhalli S."/>
            <person name="Turner R."/>
            <person name="Yooseph S."/>
            <person name="Lu F."/>
            <person name="Nusskern D.R."/>
            <person name="Shue B.C."/>
            <person name="Zheng X.H."/>
            <person name="Zhong F."/>
            <person name="Delcher A.L."/>
            <person name="Huson D.H."/>
            <person name="Kravitz S.A."/>
            <person name="Mouchard L."/>
            <person name="Reinert K."/>
            <person name="Remington K.A."/>
            <person name="Clark A.G."/>
            <person name="Waterman M.S."/>
            <person name="Eichler E.E."/>
            <person name="Adams M.D."/>
            <person name="Hunkapiller M.W."/>
            <person name="Myers E.W."/>
            <person name="Venter J.C."/>
        </authorList>
    </citation>
    <scope>NUCLEOTIDE SEQUENCE [LARGE SCALE GENOMIC DNA]</scope>
</reference>
<reference key="7">
    <citation type="journal article" date="2004" name="Genome Res.">
        <title>The status, quality, and expansion of the NIH full-length cDNA project: the Mammalian Gene Collection (MGC).</title>
        <authorList>
            <consortium name="The MGC Project Team"/>
        </authorList>
    </citation>
    <scope>NUCLEOTIDE SEQUENCE [LARGE SCALE MRNA]</scope>
</reference>
<reference key="8">
    <citation type="submission" date="2005-03" db="EMBL/GenBank/DDBJ databases">
        <authorList>
            <person name="Totoki Y."/>
            <person name="Toyoda A."/>
            <person name="Takeda T."/>
            <person name="Sakaki Y."/>
            <person name="Tanaka A."/>
            <person name="Yokoyama S."/>
            <person name="Ohara O."/>
            <person name="Nagase T."/>
            <person name="Kikuno R.F."/>
        </authorList>
    </citation>
    <scope>NUCLEOTIDE SEQUENCE [LARGE SCALE MRNA] OF 258-555</scope>
    <source>
        <tissue>Spleen</tissue>
    </source>
</reference>
<reference key="9">
    <citation type="journal article" date="1996" name="Mol. Immunol.">
        <title>Target cell-induced perforin mRNA turnover in NK3.3 cells is mediated by multiple elements within the mRNA coding region.</title>
        <authorList>
            <person name="Goebel W.S."/>
            <person name="Schloemer R.H."/>
            <person name="Brahmi Z."/>
        </authorList>
    </citation>
    <scope>NUCLEOTIDE SEQUENCE [MRNA] OF 520-555</scope>
    <scope>INDUCTION</scope>
    <source>
        <tissue>Natural killer cell</tissue>
    </source>
</reference>
<reference key="10">
    <citation type="journal article" date="1997" name="J. Immunol.">
        <title>Human autoreactive CD4+ T cell clones use perforin- or Fas/Fas ligand-mediated pathways for target cell lysis.</title>
        <authorList>
            <person name="Vergelli M."/>
            <person name="Hemmer B."/>
            <person name="Muraro P.A."/>
            <person name="Tranquill L."/>
            <person name="Biddison W.E."/>
            <person name="Sarin A."/>
            <person name="McFarland H.F."/>
            <person name="Martin R."/>
        </authorList>
    </citation>
    <scope>FUNCTION</scope>
</reference>
<reference key="11">
    <citation type="journal article" date="1997" name="J. Immunol.">
        <title>Perforin, Fas/Fas ligand, and TNF-alpha pathways as specific and bystander killing mechanisms of hepatitis C virus-specific human CTL.</title>
        <authorList>
            <person name="Ando K."/>
            <person name="Hiroishi K."/>
            <person name="Kaneko T."/>
            <person name="Moriyama T."/>
            <person name="Muto Y."/>
            <person name="Kayagaki N."/>
            <person name="Yagita H."/>
            <person name="Okumura K."/>
            <person name="Imawari M."/>
        </authorList>
    </citation>
    <scope>FUNCTION</scope>
</reference>
<reference key="12">
    <citation type="journal article" date="2009" name="J. Proteome Res.">
        <title>Glycoproteomics analysis of human liver tissue by combination of multiple enzyme digestion and hydrazide chemistry.</title>
        <authorList>
            <person name="Chen R."/>
            <person name="Jiang X."/>
            <person name="Sun D."/>
            <person name="Han G."/>
            <person name="Wang F."/>
            <person name="Ye M."/>
            <person name="Wang L."/>
            <person name="Zou H."/>
        </authorList>
    </citation>
    <scope>GLYCOSYLATION [LARGE SCALE ANALYSIS] AT ASN-205</scope>
    <source>
        <tissue>Liver</tissue>
    </source>
</reference>
<reference key="13">
    <citation type="journal article" date="2010" name="Blood">
        <title>Perforin activates clathrin- and dynamin-dependent endocytosis, which is required for plasma membrane repair and delivery of granzyme B for granzyme-mediated apoptosis.</title>
        <authorList>
            <person name="Thiery J."/>
            <person name="Keefe D."/>
            <person name="Saffarian S."/>
            <person name="Martinvalet D."/>
            <person name="Walch M."/>
            <person name="Boucrot E."/>
            <person name="Kirchhausen T."/>
            <person name="Lieberman J."/>
        </authorList>
    </citation>
    <scope>FUNCTION</scope>
    <scope>SUBCELLULAR LOCATION</scope>
</reference>
<reference key="14">
    <citation type="journal article" date="2011" name="J. Biol. Chem.">
        <title>Human perforin employs different avenues to damage membranes.</title>
        <authorList>
            <person name="Praper T."/>
            <person name="Sonnen A."/>
            <person name="Viero G."/>
            <person name="Kladnik A."/>
            <person name="Froelich C.J."/>
            <person name="Anderluh G."/>
            <person name="Dalla Serra M."/>
            <person name="Gilbert R.J."/>
        </authorList>
    </citation>
    <scope>FUNCTION</scope>
    <scope>CALCIUM-DEPENDENT PORE FORMING ACTIVITY</scope>
    <scope>SUBCELLULAR LOCATION</scope>
    <scope>SUBUNIT</scope>
    <scope>ELECTRON MICROSCOPY</scope>
</reference>
<reference key="15">
    <citation type="journal article" date="2010" name="J. Mol. Med.">
        <title>Reciprocal granzyme/perforin-mediated death of human regulatory and responder T cells is regulated by interleukin-2 (IL-2).</title>
        <authorList>
            <person name="Czystowska M."/>
            <person name="Strauss L."/>
            <person name="Bergmann C."/>
            <person name="Szajnik M."/>
            <person name="Rabinowich H."/>
            <person name="Whiteside T.L."/>
        </authorList>
    </citation>
    <scope>FUNCTION</scope>
</reference>
<reference key="16">
    <citation type="journal article" date="2013" name="Mol. Biol. Cell">
        <title>Arf-like GTPase Arl8b regulates lytic granule polarization and natural killer cell-mediated cytotoxicity.</title>
        <authorList>
            <person name="Tuli A."/>
            <person name="Thiery J."/>
            <person name="James A.M."/>
            <person name="Michelet X."/>
            <person name="Sharma M."/>
            <person name="Garg S."/>
            <person name="Sanborn K.B."/>
            <person name="Orange J.S."/>
            <person name="Lieberman J."/>
            <person name="Brenner M.B."/>
        </authorList>
    </citation>
    <scope>SUBCELLULAR LOCATION</scope>
</reference>
<reference key="17">
    <citation type="journal article" date="2014" name="J. Biol. Chem.">
        <title>The perforin pore facilitates the delivery of cationic cargos.</title>
        <authorList>
            <person name="Stewart S.E."/>
            <person name="Kondos S.C."/>
            <person name="Matthews A.Y."/>
            <person name="D'Angelo M.E."/>
            <person name="Dunstone M.A."/>
            <person name="Whisstock J.C."/>
            <person name="Trapani J.A."/>
            <person name="Bird P.I."/>
        </authorList>
    </citation>
    <scope>FUNCTION</scope>
</reference>
<reference key="18">
    <citation type="journal article" date="2020" name="Science">
        <title>Granzyme A from cytotoxic lymphocytes cleaves GSDMB to trigger pyroptosis in target cells.</title>
        <authorList>
            <person name="Zhou Z."/>
            <person name="He H."/>
            <person name="Wang K."/>
            <person name="Shi X."/>
            <person name="Wang Y."/>
            <person name="Su Y."/>
            <person name="Wang Y."/>
            <person name="Li D."/>
            <person name="Liu W."/>
            <person name="Zhang Y."/>
            <person name="Shen L."/>
            <person name="Han W."/>
            <person name="Shen L."/>
            <person name="Ding J."/>
            <person name="Shao F."/>
        </authorList>
    </citation>
    <scope>FUNCTION</scope>
</reference>
<reference key="19">
    <citation type="journal article" date="1990" name="Mol. Immunol.">
        <title>Localization and molecular modelling of the membrane-inserted domain of the ninth component of human complement and perforin.</title>
        <authorList>
            <person name="Peitsch M.C."/>
            <person name="Amiguet P."/>
            <person name="Guy R."/>
            <person name="Brunner J."/>
            <person name="Maizel J.V. Jr."/>
            <person name="Tschopp J."/>
        </authorList>
    </citation>
    <scope>3D-STRUCTURE MODELING OF MEMBRANE-SPANNING DOMAIN (MSD)</scope>
</reference>
<reference key="20">
    <citation type="journal article" date="2010" name="Nature">
        <title>The structural basis for membrane binding and pore formation by lymphocyte perforin.</title>
        <authorList>
            <person name="Law R.H."/>
            <person name="Lukoyanova N."/>
            <person name="Voskoboinik I."/>
            <person name="Caradoc-Davies T.T."/>
            <person name="Baran K."/>
            <person name="Dunstone M.A."/>
            <person name="D'Angelo M.E."/>
            <person name="Orlova E.V."/>
            <person name="Coulibaly F."/>
            <person name="Verschoor S."/>
            <person name="Browne K.A."/>
            <person name="Ciccone A."/>
            <person name="Kuiper M.J."/>
            <person name="Bird P.I."/>
            <person name="Trapani J.A."/>
            <person name="Saibil H.R."/>
            <person name="Whisstock J.C."/>
        </authorList>
    </citation>
    <scope>ELECTRON MICROSCOPY OF PORE COMPLEX</scope>
    <scope>FUNCTION</scope>
    <scope>SUBCELLULAR LOCATION</scope>
    <scope>SUBUNIT</scope>
</reference>
<reference key="21">
    <citation type="journal article" date="1999" name="Science">
        <title>Perforin gene defects in familial hemophagocytic lymphohistiocytosis.</title>
        <authorList>
            <person name="Stepp S.E."/>
            <person name="Dufourcq-Lagelouse R."/>
            <person name="Le Deist F."/>
            <person name="Bhawan S."/>
            <person name="Certain S."/>
            <person name="Mathew P.A."/>
            <person name="Henter J.-I."/>
            <person name="Bennett M."/>
            <person name="Fischer A."/>
            <person name="de Saint Basile G."/>
            <person name="Kumar V."/>
        </authorList>
    </citation>
    <scope>VARIANTS FHL2 GLY-183; TRP-225; SER-252; TYR-279; LEU-345 AND GLU-429</scope>
</reference>
<reference key="22">
    <citation type="journal article" date="2001" name="Am. J. Hum. Genet.">
        <title>Spectrum of perforin gene mutations in familial hemophagocytic lymphohistiocytosis.</title>
        <authorList>
            <person name="Goeransdotter Ericson K."/>
            <person name="Fadeel B."/>
            <person name="Nilsson-Ardnor S."/>
            <person name="Soederhaell C."/>
            <person name="Samuelsson A."/>
            <person name="Janka G."/>
            <person name="Schneider M."/>
            <person name="Guergey A."/>
            <person name="Yalman N."/>
            <person name="Revesz T."/>
            <person name="Egeler R."/>
            <person name="Jahnukainen K."/>
            <person name="Storm-Mathiesen I."/>
            <person name="Haraldsson A."/>
            <person name="Poole J."/>
            <person name="de Saint Basile G."/>
            <person name="Nordenskjoeld M."/>
            <person name="Henter J.-I."/>
        </authorList>
    </citation>
    <scope>VARIANTS FHL2 MET-50; ASN-224 AND LYS-285 DEL</scope>
</reference>
<reference key="23">
    <citation type="journal article" date="2006" name="Science">
        <title>The consensus coding sequences of human breast and colorectal cancers.</title>
        <authorList>
            <person name="Sjoeblom T."/>
            <person name="Jones S."/>
            <person name="Wood L.D."/>
            <person name="Parsons D.W."/>
            <person name="Lin J."/>
            <person name="Barber T.D."/>
            <person name="Mandelker D."/>
            <person name="Leary R.J."/>
            <person name="Ptak J."/>
            <person name="Silliman N."/>
            <person name="Szabo S."/>
            <person name="Buckhaults P."/>
            <person name="Farrell C."/>
            <person name="Meeh P."/>
            <person name="Markowitz S.D."/>
            <person name="Willis J."/>
            <person name="Dawson D."/>
            <person name="Willson J.K.V."/>
            <person name="Gazdar A.F."/>
            <person name="Hartigan J."/>
            <person name="Wu L."/>
            <person name="Liu C."/>
            <person name="Parmigiani G."/>
            <person name="Park B.H."/>
            <person name="Bachman K.E."/>
            <person name="Papadopoulos N."/>
            <person name="Vogelstein B."/>
            <person name="Kinzler K.W."/>
            <person name="Velculescu V.E."/>
        </authorList>
    </citation>
    <scope>VARIANT [LARGE SCALE ANALYSIS] HIS-123</scope>
</reference>
<dbReference type="EMBL" id="X13224">
    <property type="protein sequence ID" value="CAA31612.1"/>
    <property type="molecule type" value="mRNA"/>
</dbReference>
<dbReference type="EMBL" id="M28393">
    <property type="protein sequence ID" value="AAA60065.1"/>
    <property type="molecule type" value="mRNA"/>
</dbReference>
<dbReference type="EMBL" id="M31951">
    <property type="protein sequence ID" value="AAA60167.1"/>
    <property type="molecule type" value="Genomic_DNA"/>
</dbReference>
<dbReference type="EMBL" id="AK312754">
    <property type="protein sequence ID" value="BAG35621.1"/>
    <property type="molecule type" value="mRNA"/>
</dbReference>
<dbReference type="EMBL" id="AL355344">
    <property type="status" value="NOT_ANNOTATED_CDS"/>
    <property type="molecule type" value="Genomic_DNA"/>
</dbReference>
<dbReference type="EMBL" id="CH471083">
    <property type="protein sequence ID" value="EAW54407.1"/>
    <property type="molecule type" value="Genomic_DNA"/>
</dbReference>
<dbReference type="EMBL" id="BC047695">
    <property type="protein sequence ID" value="AAH47695.2"/>
    <property type="molecule type" value="mRNA"/>
</dbReference>
<dbReference type="EMBL" id="BC063043">
    <property type="protein sequence ID" value="AAH63043.1"/>
    <property type="molecule type" value="mRNA"/>
</dbReference>
<dbReference type="EMBL" id="AB209604">
    <property type="protein sequence ID" value="BAD92841.1"/>
    <property type="molecule type" value="mRNA"/>
</dbReference>
<dbReference type="EMBL" id="L40557">
    <property type="protein sequence ID" value="AAA63618.1"/>
    <property type="molecule type" value="mRNA"/>
</dbReference>
<dbReference type="CCDS" id="CCDS7305.1"/>
<dbReference type="PIR" id="A45816">
    <property type="entry name" value="A37181"/>
</dbReference>
<dbReference type="RefSeq" id="NP_001076585.1">
    <property type="nucleotide sequence ID" value="NM_001083116.3"/>
</dbReference>
<dbReference type="RefSeq" id="NP_005032.2">
    <property type="nucleotide sequence ID" value="NM_005041.4"/>
</dbReference>
<dbReference type="SMR" id="P14222"/>
<dbReference type="BioGRID" id="111542">
    <property type="interactions" value="91"/>
</dbReference>
<dbReference type="DIP" id="DIP-53288N"/>
<dbReference type="FunCoup" id="P14222">
    <property type="interactions" value="407"/>
</dbReference>
<dbReference type="IntAct" id="P14222">
    <property type="interactions" value="42"/>
</dbReference>
<dbReference type="STRING" id="9606.ENSP00000398568"/>
<dbReference type="BindingDB" id="P14222"/>
<dbReference type="ChEMBL" id="CHEMBL5480"/>
<dbReference type="GuidetoPHARMACOLOGY" id="3100"/>
<dbReference type="TCDB" id="1.C.39.2.8">
    <property type="family name" value="the membrane attack complex/perforin (macpf) family"/>
</dbReference>
<dbReference type="GlyCosmos" id="P14222">
    <property type="glycosylation" value="2 sites, No reported glycans"/>
</dbReference>
<dbReference type="GlyGen" id="P14222">
    <property type="glycosylation" value="3 sites, 4 N-linked glycans (1 site)"/>
</dbReference>
<dbReference type="iPTMnet" id="P14222"/>
<dbReference type="PhosphoSitePlus" id="P14222"/>
<dbReference type="BioMuta" id="PRF1"/>
<dbReference type="DMDM" id="129819"/>
<dbReference type="jPOST" id="P14222"/>
<dbReference type="MassIVE" id="P14222"/>
<dbReference type="PaxDb" id="9606-ENSP00000398568"/>
<dbReference type="PeptideAtlas" id="P14222"/>
<dbReference type="ProteomicsDB" id="53040"/>
<dbReference type="Antibodypedia" id="3723">
    <property type="antibodies" value="636 antibodies from 44 providers"/>
</dbReference>
<dbReference type="DNASU" id="5551"/>
<dbReference type="Ensembl" id="ENST00000373209.2">
    <property type="protein sequence ID" value="ENSP00000362305.1"/>
    <property type="gene ID" value="ENSG00000180644.8"/>
</dbReference>
<dbReference type="Ensembl" id="ENST00000441259.2">
    <property type="protein sequence ID" value="ENSP00000398568.1"/>
    <property type="gene ID" value="ENSG00000180644.8"/>
</dbReference>
<dbReference type="GeneID" id="5551"/>
<dbReference type="KEGG" id="hsa:5551"/>
<dbReference type="MANE-Select" id="ENST00000441259.2">
    <property type="protein sequence ID" value="ENSP00000398568.1"/>
    <property type="RefSeq nucleotide sequence ID" value="NM_001083116.3"/>
    <property type="RefSeq protein sequence ID" value="NP_001076585.1"/>
</dbReference>
<dbReference type="UCSC" id="uc001jrf.5">
    <property type="organism name" value="human"/>
</dbReference>
<dbReference type="AGR" id="HGNC:9360"/>
<dbReference type="CTD" id="5551"/>
<dbReference type="DisGeNET" id="5551"/>
<dbReference type="GeneCards" id="PRF1"/>
<dbReference type="GeneReviews" id="PRF1"/>
<dbReference type="HGNC" id="HGNC:9360">
    <property type="gene designation" value="PRF1"/>
</dbReference>
<dbReference type="HPA" id="ENSG00000180644">
    <property type="expression patterns" value="Group enriched (bone marrow, lung, lymphoid tissue)"/>
</dbReference>
<dbReference type="MalaCards" id="PRF1"/>
<dbReference type="MIM" id="170280">
    <property type="type" value="gene"/>
</dbReference>
<dbReference type="MIM" id="603553">
    <property type="type" value="phenotype"/>
</dbReference>
<dbReference type="neXtProt" id="NX_P14222"/>
<dbReference type="OpenTargets" id="ENSG00000180644"/>
<dbReference type="Orphanet" id="540">
    <property type="disease" value="Familial hemophagocytic lymphohistiocytosis"/>
</dbReference>
<dbReference type="Orphanet" id="391343">
    <property type="disease" value="Fatal post-viral neurodegenerative disorder"/>
</dbReference>
<dbReference type="Orphanet" id="88">
    <property type="disease" value="Idiopathic aplastic anemia"/>
</dbReference>
<dbReference type="PharmGKB" id="PA33732"/>
<dbReference type="VEuPathDB" id="HostDB:ENSG00000180644"/>
<dbReference type="eggNOG" id="ENOG502RQWS">
    <property type="taxonomic scope" value="Eukaryota"/>
</dbReference>
<dbReference type="GeneTree" id="ENSGT00530000063725"/>
<dbReference type="HOGENOM" id="CLU_039516_2_0_1"/>
<dbReference type="InParanoid" id="P14222"/>
<dbReference type="OMA" id="LCKNALQ"/>
<dbReference type="OrthoDB" id="1366754at2759"/>
<dbReference type="PAN-GO" id="P14222">
    <property type="GO annotations" value="5 GO annotations based on evolutionary models"/>
</dbReference>
<dbReference type="PhylomeDB" id="P14222"/>
<dbReference type="TreeFam" id="TF330498"/>
<dbReference type="PathwayCommons" id="P14222"/>
<dbReference type="Reactome" id="R-HSA-9725371">
    <property type="pathway name" value="Nuclear events stimulated by ALK signaling in cancer"/>
</dbReference>
<dbReference type="SignaLink" id="P14222"/>
<dbReference type="SIGNOR" id="P14222"/>
<dbReference type="BioGRID-ORCS" id="5551">
    <property type="hits" value="9 hits in 1159 CRISPR screens"/>
</dbReference>
<dbReference type="GeneWiki" id="Perforin"/>
<dbReference type="GenomeRNAi" id="5551"/>
<dbReference type="Pharos" id="P14222">
    <property type="development level" value="Tchem"/>
</dbReference>
<dbReference type="PRO" id="PR:P14222"/>
<dbReference type="Proteomes" id="UP000005640">
    <property type="component" value="Chromosome 10"/>
</dbReference>
<dbReference type="RNAct" id="P14222">
    <property type="molecule type" value="protein"/>
</dbReference>
<dbReference type="Bgee" id="ENSG00000180644">
    <property type="expression patterns" value="Expressed in granulocyte and 157 other cell types or tissues"/>
</dbReference>
<dbReference type="ExpressionAtlas" id="P14222">
    <property type="expression patterns" value="baseline and differential"/>
</dbReference>
<dbReference type="GO" id="GO:0044194">
    <property type="term" value="C:cytolytic granule"/>
    <property type="evidence" value="ECO:0000314"/>
    <property type="project" value="UniProtKB"/>
</dbReference>
<dbReference type="GO" id="GO:1904856">
    <property type="term" value="C:cytolytic granule lumen"/>
    <property type="evidence" value="ECO:0000304"/>
    <property type="project" value="Reactome"/>
</dbReference>
<dbReference type="GO" id="GO:0005829">
    <property type="term" value="C:cytosol"/>
    <property type="evidence" value="ECO:0000314"/>
    <property type="project" value="HPA"/>
</dbReference>
<dbReference type="GO" id="GO:0031904">
    <property type="term" value="C:endosome lumen"/>
    <property type="evidence" value="ECO:0007669"/>
    <property type="project" value="UniProtKB-SubCell"/>
</dbReference>
<dbReference type="GO" id="GO:0005576">
    <property type="term" value="C:extracellular region"/>
    <property type="evidence" value="ECO:0007669"/>
    <property type="project" value="UniProtKB-SubCell"/>
</dbReference>
<dbReference type="GO" id="GO:0001772">
    <property type="term" value="C:immunological synapse"/>
    <property type="evidence" value="ECO:0000250"/>
    <property type="project" value="UniProt"/>
</dbReference>
<dbReference type="GO" id="GO:0016020">
    <property type="term" value="C:membrane"/>
    <property type="evidence" value="ECO:0000314"/>
    <property type="project" value="UniProtKB"/>
</dbReference>
<dbReference type="GO" id="GO:0005886">
    <property type="term" value="C:plasma membrane"/>
    <property type="evidence" value="ECO:0000314"/>
    <property type="project" value="UniProt"/>
</dbReference>
<dbReference type="GO" id="GO:0005509">
    <property type="term" value="F:calcium ion binding"/>
    <property type="evidence" value="ECO:0000250"/>
    <property type="project" value="UniProtKB"/>
</dbReference>
<dbReference type="GO" id="GO:0042802">
    <property type="term" value="F:identical protein binding"/>
    <property type="evidence" value="ECO:0000353"/>
    <property type="project" value="IntAct"/>
</dbReference>
<dbReference type="GO" id="GO:0140911">
    <property type="term" value="F:pore-forming activity"/>
    <property type="evidence" value="ECO:0007669"/>
    <property type="project" value="InterPro"/>
</dbReference>
<dbReference type="GO" id="GO:0022829">
    <property type="term" value="F:wide pore channel activity"/>
    <property type="evidence" value="ECO:0000314"/>
    <property type="project" value="UniProtKB"/>
</dbReference>
<dbReference type="GO" id="GO:0006915">
    <property type="term" value="P:apoptotic process"/>
    <property type="evidence" value="ECO:0000304"/>
    <property type="project" value="ProtInc"/>
</dbReference>
<dbReference type="GO" id="GO:0006968">
    <property type="term" value="P:cellular defense response"/>
    <property type="evidence" value="ECO:0000304"/>
    <property type="project" value="ProtInc"/>
</dbReference>
<dbReference type="GO" id="GO:0002357">
    <property type="term" value="P:defense response to tumor cell"/>
    <property type="evidence" value="ECO:0000250"/>
    <property type="project" value="UniProtKB"/>
</dbReference>
<dbReference type="GO" id="GO:0051607">
    <property type="term" value="P:defense response to virus"/>
    <property type="evidence" value="ECO:0000250"/>
    <property type="project" value="UniProtKB"/>
</dbReference>
<dbReference type="GO" id="GO:0140507">
    <property type="term" value="P:granzyme-mediated programmed cell death signaling pathway"/>
    <property type="evidence" value="ECO:0000250"/>
    <property type="project" value="UniProt"/>
</dbReference>
<dbReference type="GO" id="GO:0002418">
    <property type="term" value="P:immune response to tumor cell"/>
    <property type="evidence" value="ECO:0000250"/>
    <property type="project" value="UniProtKB"/>
</dbReference>
<dbReference type="GO" id="GO:0001771">
    <property type="term" value="P:immunological synapse formation"/>
    <property type="evidence" value="ECO:0000314"/>
    <property type="project" value="UniProtKB"/>
</dbReference>
<dbReference type="GO" id="GO:0031640">
    <property type="term" value="P:killing of cells of another organism"/>
    <property type="evidence" value="ECO:0007669"/>
    <property type="project" value="UniProtKB-KW"/>
</dbReference>
<dbReference type="GO" id="GO:0051712">
    <property type="term" value="P:positive regulation of killing of cells of another organism"/>
    <property type="evidence" value="ECO:0000314"/>
    <property type="project" value="UniProtKB"/>
</dbReference>
<dbReference type="GO" id="GO:0051260">
    <property type="term" value="P:protein homooligomerization"/>
    <property type="evidence" value="ECO:0000314"/>
    <property type="project" value="UniProtKB"/>
</dbReference>
<dbReference type="GO" id="GO:0017038">
    <property type="term" value="P:protein import"/>
    <property type="evidence" value="ECO:0000314"/>
    <property type="project" value="UniProt"/>
</dbReference>
<dbReference type="GO" id="GO:0009306">
    <property type="term" value="P:protein secretion"/>
    <property type="evidence" value="ECO:0000250"/>
    <property type="project" value="UniProt"/>
</dbReference>
<dbReference type="GO" id="GO:0071806">
    <property type="term" value="P:protein transmembrane transport"/>
    <property type="evidence" value="ECO:0000314"/>
    <property type="project" value="UniProtKB"/>
</dbReference>
<dbReference type="GO" id="GO:0001913">
    <property type="term" value="P:T cell mediated cytotoxicity"/>
    <property type="evidence" value="ECO:0000250"/>
    <property type="project" value="UniProt"/>
</dbReference>
<dbReference type="CDD" id="cd04032">
    <property type="entry name" value="C2_Perforin"/>
    <property type="match status" value="1"/>
</dbReference>
<dbReference type="FunFam" id="2.60.40.150:FF:000216">
    <property type="entry name" value="Perforin-1 precursor"/>
    <property type="match status" value="1"/>
</dbReference>
<dbReference type="Gene3D" id="2.60.40.150">
    <property type="entry name" value="C2 domain"/>
    <property type="match status" value="1"/>
</dbReference>
<dbReference type="InterPro" id="IPR000008">
    <property type="entry name" value="C2_dom"/>
</dbReference>
<dbReference type="InterPro" id="IPR035892">
    <property type="entry name" value="C2_domain_sf"/>
</dbReference>
<dbReference type="InterPro" id="IPR020864">
    <property type="entry name" value="MACPF"/>
</dbReference>
<dbReference type="InterPro" id="IPR020863">
    <property type="entry name" value="MACPF_CS"/>
</dbReference>
<dbReference type="InterPro" id="IPR037300">
    <property type="entry name" value="Perforin-1_C2"/>
</dbReference>
<dbReference type="InterPro" id="IPR052784">
    <property type="entry name" value="Perforin-1_pore-forming"/>
</dbReference>
<dbReference type="PANTHER" id="PTHR46096">
    <property type="entry name" value="PERFORIN-1"/>
    <property type="match status" value="1"/>
</dbReference>
<dbReference type="PANTHER" id="PTHR46096:SF3">
    <property type="entry name" value="PERFORIN-1"/>
    <property type="match status" value="1"/>
</dbReference>
<dbReference type="Pfam" id="PF00168">
    <property type="entry name" value="C2"/>
    <property type="match status" value="1"/>
</dbReference>
<dbReference type="Pfam" id="PF01823">
    <property type="entry name" value="MACPF"/>
    <property type="match status" value="1"/>
</dbReference>
<dbReference type="SMART" id="SM00239">
    <property type="entry name" value="C2"/>
    <property type="match status" value="1"/>
</dbReference>
<dbReference type="SMART" id="SM00457">
    <property type="entry name" value="MACPF"/>
    <property type="match status" value="1"/>
</dbReference>
<dbReference type="SUPFAM" id="SSF49562">
    <property type="entry name" value="C2 domain (Calcium/lipid-binding domain, CaLB)"/>
    <property type="match status" value="1"/>
</dbReference>
<dbReference type="PROSITE" id="PS50004">
    <property type="entry name" value="C2"/>
    <property type="match status" value="1"/>
</dbReference>
<dbReference type="PROSITE" id="PS00279">
    <property type="entry name" value="MACPF_1"/>
    <property type="match status" value="1"/>
</dbReference>
<dbReference type="PROSITE" id="PS51412">
    <property type="entry name" value="MACPF_2"/>
    <property type="match status" value="1"/>
</dbReference>
<gene>
    <name type="primary">PRF1</name>
    <name type="synonym">PFP</name>
</gene>
<feature type="signal peptide" evidence="1">
    <location>
        <begin position="1"/>
        <end position="21"/>
    </location>
</feature>
<feature type="chain" id="PRO_0000023609" description="Perforin-1">
    <location>
        <begin position="22"/>
        <end position="555"/>
    </location>
</feature>
<feature type="transmembrane region" description="Beta stranded; Name=CH1" evidence="1">
    <location>
        <begin position="129"/>
        <end position="149"/>
    </location>
</feature>
<feature type="transmembrane region" description="Beta stranded; Name=CH2" evidence="1">
    <location>
        <begin position="257"/>
        <end position="279"/>
    </location>
</feature>
<feature type="domain" description="MACPF" evidence="4">
    <location>
        <begin position="27"/>
        <end position="375"/>
    </location>
</feature>
<feature type="domain" description="EGF-like">
    <location>
        <begin position="376"/>
        <end position="408"/>
    </location>
</feature>
<feature type="domain" description="C2" evidence="3">
    <location>
        <begin position="397"/>
        <end position="519"/>
    </location>
</feature>
<feature type="binding site" evidence="1">
    <location>
        <position position="429"/>
    </location>
    <ligand>
        <name>Ca(2+)</name>
        <dbReference type="ChEBI" id="CHEBI:29108"/>
        <label>1</label>
    </ligand>
</feature>
<feature type="binding site" evidence="1">
    <location>
        <position position="430"/>
    </location>
    <ligand>
        <name>Ca(2+)</name>
        <dbReference type="ChEBI" id="CHEBI:29108"/>
        <label>1</label>
    </ligand>
</feature>
<feature type="binding site" evidence="1">
    <location>
        <position position="430"/>
    </location>
    <ligand>
        <name>Ca(2+)</name>
        <dbReference type="ChEBI" id="CHEBI:29108"/>
        <label>2</label>
    </ligand>
</feature>
<feature type="binding site" evidence="1">
    <location>
        <position position="430"/>
    </location>
    <ligand>
        <name>Ca(2+)</name>
        <dbReference type="ChEBI" id="CHEBI:29108"/>
        <label>3</label>
    </ligand>
</feature>
<feature type="binding site" evidence="1">
    <location>
        <position position="433"/>
    </location>
    <ligand>
        <name>Ca(2+)</name>
        <dbReference type="ChEBI" id="CHEBI:29108"/>
        <label>2</label>
    </ligand>
</feature>
<feature type="binding site" evidence="1">
    <location>
        <position position="434"/>
    </location>
    <ligand>
        <name>Ca(2+)</name>
        <dbReference type="ChEBI" id="CHEBI:29108"/>
        <label>2</label>
    </ligand>
</feature>
<feature type="binding site" evidence="1">
    <location>
        <position position="436"/>
    </location>
    <ligand>
        <name>Ca(2+)</name>
        <dbReference type="ChEBI" id="CHEBI:29108"/>
        <label>2</label>
    </ligand>
</feature>
<feature type="binding site" evidence="1">
    <location>
        <position position="436"/>
    </location>
    <ligand>
        <name>Ca(2+)</name>
        <dbReference type="ChEBI" id="CHEBI:29108"/>
        <label>3</label>
    </ligand>
</feature>
<feature type="binding site" evidence="1">
    <location>
        <position position="484"/>
    </location>
    <ligand>
        <name>Ca(2+)</name>
        <dbReference type="ChEBI" id="CHEBI:29108"/>
        <label>1</label>
    </ligand>
</feature>
<feature type="binding site" evidence="1">
    <location>
        <position position="484"/>
    </location>
    <ligand>
        <name>Ca(2+)</name>
        <dbReference type="ChEBI" id="CHEBI:29108"/>
        <label>3</label>
    </ligand>
</feature>
<feature type="binding site" evidence="1">
    <location>
        <position position="486"/>
    </location>
    <ligand>
        <name>Ca(2+)</name>
        <dbReference type="ChEBI" id="CHEBI:29108"/>
        <label>1</label>
    </ligand>
</feature>
<feature type="binding site" evidence="1">
    <location>
        <position position="486"/>
    </location>
    <ligand>
        <name>Ca(2+)</name>
        <dbReference type="ChEBI" id="CHEBI:29108"/>
        <label>3</label>
    </ligand>
</feature>
<feature type="binding site" evidence="1">
    <location>
        <position position="486"/>
    </location>
    <ligand>
        <name>Ca(2+)</name>
        <dbReference type="ChEBI" id="CHEBI:29108"/>
        <label>4</label>
    </ligand>
</feature>
<feature type="binding site" evidence="1">
    <location>
        <position position="486"/>
    </location>
    <ligand>
        <name>Ca(2+)</name>
        <dbReference type="ChEBI" id="CHEBI:29108"/>
        <label>5</label>
    </ligand>
</feature>
<feature type="binding site" evidence="1">
    <location>
        <position position="490"/>
    </location>
    <ligand>
        <name>Ca(2+)</name>
        <dbReference type="ChEBI" id="CHEBI:29108"/>
        <label>4</label>
    </ligand>
</feature>
<feature type="binding site" evidence="1">
    <location>
        <position position="491"/>
    </location>
    <ligand>
        <name>Ca(2+)</name>
        <dbReference type="ChEBI" id="CHEBI:29108"/>
        <label>5</label>
    </ligand>
</feature>
<feature type="binding site" evidence="1">
    <location>
        <position position="492"/>
    </location>
    <ligand>
        <name>Ca(2+)</name>
        <dbReference type="ChEBI" id="CHEBI:29108"/>
        <label>1</label>
    </ligand>
</feature>
<feature type="binding site" evidence="1">
    <location>
        <position position="492"/>
    </location>
    <ligand>
        <name>Ca(2+)</name>
        <dbReference type="ChEBI" id="CHEBI:29108"/>
        <label>4</label>
    </ligand>
</feature>
<feature type="site" description="Important for oligomerization" evidence="1">
    <location>
        <position position="214"/>
    </location>
</feature>
<feature type="site" description="Important for oligomerization" evidence="1">
    <location>
        <position position="344"/>
    </location>
</feature>
<feature type="glycosylation site" description="N-linked (GlcNAc...) asparagine" evidence="8">
    <location>
        <position position="205"/>
    </location>
</feature>
<feature type="glycosylation site" description="N-linked (GlcNAc...) asparagine" evidence="2">
    <location>
        <position position="549"/>
    </location>
</feature>
<feature type="disulfide bond" evidence="1">
    <location>
        <begin position="23"/>
        <end position="76"/>
    </location>
</feature>
<feature type="disulfide bond" evidence="1">
    <location>
        <begin position="31"/>
        <end position="73"/>
    </location>
</feature>
<feature type="disulfide bond" evidence="1">
    <location>
        <begin position="102"/>
        <end position="176"/>
    </location>
</feature>
<feature type="disulfide bond" evidence="1">
    <location>
        <begin position="242"/>
        <end position="408"/>
    </location>
</feature>
<feature type="disulfide bond" evidence="1">
    <location>
        <begin position="377"/>
        <end position="393"/>
    </location>
</feature>
<feature type="disulfide bond" evidence="1">
    <location>
        <begin position="381"/>
        <end position="395"/>
    </location>
</feature>
<feature type="disulfide bond" evidence="1">
    <location>
        <begin position="397"/>
        <end position="407"/>
    </location>
</feature>
<feature type="disulfide bond" evidence="1">
    <location>
        <begin position="497"/>
        <end position="510"/>
    </location>
</feature>
<feature type="disulfide bond" evidence="1">
    <location>
        <begin position="525"/>
        <end position="534"/>
    </location>
</feature>
<feature type="sequence variant" id="VAR_061504" description="In dbSNP:rs35418374.">
    <original>R</original>
    <variation>H</variation>
    <location>
        <position position="4"/>
    </location>
</feature>
<feature type="sequence variant" id="VAR_010772" description="In FHL2; dbSNP:rs776299562." evidence="6">
    <original>V</original>
    <variation>M</variation>
    <location>
        <position position="50"/>
    </location>
</feature>
<feature type="sequence variant" id="VAR_050482" description="In dbSNP:rs35947132.">
    <original>A</original>
    <variation>V</variation>
    <location>
        <position position="91"/>
    </location>
</feature>
<feature type="sequence variant" id="VAR_010773" description="In dbSNP:rs139336186." evidence="7">
    <original>R</original>
    <variation>H</variation>
    <location>
        <position position="123"/>
    </location>
</feature>
<feature type="sequence variant" id="VAR_029773" description="In dbSNP:rs12263572.">
    <original>V</original>
    <variation>M</variation>
    <location>
        <position position="135"/>
    </location>
</feature>
<feature type="sequence variant" id="VAR_010744" description="In FHL2; dbSNP:rs104894183." evidence="5">
    <original>V</original>
    <variation>G</variation>
    <location>
        <position position="183"/>
    </location>
</feature>
<feature type="sequence variant" id="VAR_010774" description="In FHL2." evidence="6">
    <original>I</original>
    <variation>N</variation>
    <location>
        <position position="224"/>
    </location>
</feature>
<feature type="sequence variant" id="VAR_010745" description="In FHL2; dbSNP:rs28933973." evidence="5">
    <original>R</original>
    <variation>W</variation>
    <location>
        <position position="225"/>
    </location>
</feature>
<feature type="sequence variant" id="VAR_010746" description="In FHL2; dbSNP:rs28933375." evidence="5">
    <original>N</original>
    <variation>S</variation>
    <location>
        <position position="252"/>
    </location>
</feature>
<feature type="sequence variant" id="VAR_010747" description="In FHL2; dbSNP:rs104894182." evidence="5">
    <original>C</original>
    <variation>Y</variation>
    <location>
        <position position="279"/>
    </location>
</feature>
<feature type="sequence variant" id="VAR_010775" description="In FHL2." evidence="6">
    <location>
        <position position="285"/>
    </location>
</feature>
<feature type="sequence variant" id="VAR_010748" description="In FHL2; dbSNP:rs28933374." evidence="5">
    <original>P</original>
    <variation>L</variation>
    <location>
        <position position="345"/>
    </location>
</feature>
<feature type="sequence variant" id="VAR_010749" description="In FHL2; dbSNP:rs104894181." evidence="5">
    <original>G</original>
    <variation>E</variation>
    <location>
        <position position="429"/>
    </location>
</feature>
<feature type="sequence conflict" description="In Ref. 1; CAA31612." evidence="19" ref="1">
    <original>L</original>
    <variation>V</variation>
    <location>
        <position position="332"/>
    </location>
</feature>
<feature type="sequence conflict" description="In Ref. 1; CAA31612." evidence="19" ref="1">
    <original>G</original>
    <variation>S</variation>
    <location>
        <position position="426"/>
    </location>
</feature>